<name>TRPM2_RAT</name>
<evidence type="ECO:0000250" key="1">
    <source>
        <dbReference type="UniProtKB" id="A0A0R4IMY7"/>
    </source>
</evidence>
<evidence type="ECO:0000250" key="2">
    <source>
        <dbReference type="UniProtKB" id="O94759"/>
    </source>
</evidence>
<evidence type="ECO:0000250" key="3">
    <source>
        <dbReference type="UniProtKB" id="Q91YD4"/>
    </source>
</evidence>
<evidence type="ECO:0000255" key="4">
    <source>
        <dbReference type="PROSITE-ProRule" id="PRU00794"/>
    </source>
</evidence>
<evidence type="ECO:0000256" key="5">
    <source>
        <dbReference type="SAM" id="MobiDB-lite"/>
    </source>
</evidence>
<evidence type="ECO:0000269" key="6">
    <source>
    </source>
</evidence>
<evidence type="ECO:0000269" key="7">
    <source>
    </source>
</evidence>
<evidence type="ECO:0000269" key="8">
    <source>
    </source>
</evidence>
<evidence type="ECO:0000269" key="9">
    <source>
    </source>
</evidence>
<evidence type="ECO:0000269" key="10">
    <source>
    </source>
</evidence>
<evidence type="ECO:0000269" key="11">
    <source>
    </source>
</evidence>
<evidence type="ECO:0000305" key="12"/>
<evidence type="ECO:0000312" key="13">
    <source>
        <dbReference type="EMBL" id="AAW65801.1"/>
    </source>
</evidence>
<evidence type="ECO:0000312" key="14">
    <source>
        <dbReference type="EMBL" id="BAE72117.1"/>
    </source>
</evidence>
<evidence type="ECO:0000312" key="15">
    <source>
        <dbReference type="Proteomes" id="UP000002494"/>
    </source>
</evidence>
<evidence type="ECO:0000312" key="16">
    <source>
        <dbReference type="RGD" id="1311889"/>
    </source>
</evidence>
<accession>E9PTA2</accession>
<accession>Q2PH54</accession>
<accession>Q5G856</accession>
<dbReference type="EMBL" id="AB193179">
    <property type="protein sequence ID" value="BAE72117.1"/>
    <property type="molecule type" value="mRNA"/>
</dbReference>
<dbReference type="EMBL" id="AY749166">
    <property type="protein sequence ID" value="AAW65801.1"/>
    <property type="molecule type" value="mRNA"/>
</dbReference>
<dbReference type="EMBL" id="AABR07044580">
    <property type="status" value="NOT_ANNOTATED_CDS"/>
    <property type="molecule type" value="Genomic_DNA"/>
</dbReference>
<dbReference type="EMBL" id="AABR07044581">
    <property type="status" value="NOT_ANNOTATED_CDS"/>
    <property type="molecule type" value="Genomic_DNA"/>
</dbReference>
<dbReference type="EMBL" id="AABR07072820">
    <property type="status" value="NOT_ANNOTATED_CDS"/>
    <property type="molecule type" value="Genomic_DNA"/>
</dbReference>
<dbReference type="EMBL" id="AC109383">
    <property type="status" value="NOT_ANNOTATED_CDS"/>
    <property type="molecule type" value="Genomic_DNA"/>
</dbReference>
<dbReference type="RefSeq" id="NP_001011559.1">
    <property type="nucleotide sequence ID" value="NM_001011559.1"/>
</dbReference>
<dbReference type="RefSeq" id="XP_006256311.1">
    <property type="nucleotide sequence ID" value="XM_006256249.5"/>
</dbReference>
<dbReference type="RefSeq" id="XP_063135121.1">
    <property type="nucleotide sequence ID" value="XM_063279051.1"/>
</dbReference>
<dbReference type="SMR" id="E9PTA2"/>
<dbReference type="FunCoup" id="E9PTA2">
    <property type="interactions" value="687"/>
</dbReference>
<dbReference type="STRING" id="10116.ENSRNOP00000001631"/>
<dbReference type="BindingDB" id="E9PTA2"/>
<dbReference type="ChEMBL" id="CHEMBL4295638"/>
<dbReference type="iPTMnet" id="E9PTA2"/>
<dbReference type="PhosphoSitePlus" id="E9PTA2"/>
<dbReference type="PaxDb" id="10116-ENSRNOP00000001631"/>
<dbReference type="PeptideAtlas" id="E9PTA2"/>
<dbReference type="GeneID" id="294329"/>
<dbReference type="KEGG" id="rno:294329"/>
<dbReference type="AGR" id="RGD:1311889"/>
<dbReference type="CTD" id="7226"/>
<dbReference type="RGD" id="1311889">
    <property type="gene designation" value="Trpm2"/>
</dbReference>
<dbReference type="VEuPathDB" id="HostDB:ENSRNOG00000001216"/>
<dbReference type="eggNOG" id="KOG3614">
    <property type="taxonomic scope" value="Eukaryota"/>
</dbReference>
<dbReference type="eggNOG" id="KOG4195">
    <property type="taxonomic scope" value="Eukaryota"/>
</dbReference>
<dbReference type="HOGENOM" id="CLU_001390_0_2_1"/>
<dbReference type="InParanoid" id="E9PTA2"/>
<dbReference type="PhylomeDB" id="E9PTA2"/>
<dbReference type="TreeFam" id="TF314204"/>
<dbReference type="Reactome" id="R-RNO-3295583">
    <property type="pathway name" value="TRP channels"/>
</dbReference>
<dbReference type="Reactome" id="R-RNO-6798695">
    <property type="pathway name" value="Neutrophil degranulation"/>
</dbReference>
<dbReference type="PRO" id="PR:E9PTA2"/>
<dbReference type="Proteomes" id="UP000002494">
    <property type="component" value="Chromosome 20"/>
</dbReference>
<dbReference type="Bgee" id="ENSRNOG00000001216">
    <property type="expression patterns" value="Expressed in spleen and 15 other cell types or tissues"/>
</dbReference>
<dbReference type="GO" id="GO:0042995">
    <property type="term" value="C:cell projection"/>
    <property type="evidence" value="ECO:0007669"/>
    <property type="project" value="UniProtKB-SubCell"/>
</dbReference>
<dbReference type="GO" id="GO:0030659">
    <property type="term" value="C:cytoplasmic vesicle membrane"/>
    <property type="evidence" value="ECO:0000250"/>
    <property type="project" value="UniProtKB"/>
</dbReference>
<dbReference type="GO" id="GO:0005765">
    <property type="term" value="C:lysosomal membrane"/>
    <property type="evidence" value="ECO:0000250"/>
    <property type="project" value="UniProtKB"/>
</dbReference>
<dbReference type="GO" id="GO:0005764">
    <property type="term" value="C:lysosome"/>
    <property type="evidence" value="ECO:0000266"/>
    <property type="project" value="RGD"/>
</dbReference>
<dbReference type="GO" id="GO:0043025">
    <property type="term" value="C:neuronal cell body"/>
    <property type="evidence" value="ECO:0000314"/>
    <property type="project" value="RGD"/>
</dbReference>
<dbReference type="GO" id="GO:0043204">
    <property type="term" value="C:perikaryon"/>
    <property type="evidence" value="ECO:0007669"/>
    <property type="project" value="UniProtKB-SubCell"/>
</dbReference>
<dbReference type="GO" id="GO:0005886">
    <property type="term" value="C:plasma membrane"/>
    <property type="evidence" value="ECO:0000250"/>
    <property type="project" value="UniProtKB"/>
</dbReference>
<dbReference type="GO" id="GO:0005509">
    <property type="term" value="F:calcium ion binding"/>
    <property type="evidence" value="ECO:0000250"/>
    <property type="project" value="UniProtKB"/>
</dbReference>
<dbReference type="GO" id="GO:0015278">
    <property type="term" value="F:intracellularly gated calcium channel activity"/>
    <property type="evidence" value="ECO:0000250"/>
    <property type="project" value="UniProtKB"/>
</dbReference>
<dbReference type="GO" id="GO:0099604">
    <property type="term" value="F:ligand-gated calcium channel activity"/>
    <property type="evidence" value="ECO:0000250"/>
    <property type="project" value="UniProtKB"/>
</dbReference>
<dbReference type="GO" id="GO:0005384">
    <property type="term" value="F:manganese ion transmembrane transporter activity"/>
    <property type="evidence" value="ECO:0000266"/>
    <property type="project" value="RGD"/>
</dbReference>
<dbReference type="GO" id="GO:0072571">
    <property type="term" value="F:mono-ADP-D-ribose binding"/>
    <property type="evidence" value="ECO:0000250"/>
    <property type="project" value="UniProtKB"/>
</dbReference>
<dbReference type="GO" id="GO:0005261">
    <property type="term" value="F:monoatomic cation channel activity"/>
    <property type="evidence" value="ECO:0000250"/>
    <property type="project" value="UniProtKB"/>
</dbReference>
<dbReference type="GO" id="GO:0005272">
    <property type="term" value="F:sodium channel activity"/>
    <property type="evidence" value="ECO:0007669"/>
    <property type="project" value="UniProtKB-KW"/>
</dbReference>
<dbReference type="GO" id="GO:0098703">
    <property type="term" value="P:calcium ion import across plasma membrane"/>
    <property type="evidence" value="ECO:0000315"/>
    <property type="project" value="RGD"/>
</dbReference>
<dbReference type="GO" id="GO:0097553">
    <property type="term" value="P:calcium ion transmembrane import into cytosol"/>
    <property type="evidence" value="ECO:0000250"/>
    <property type="project" value="UniProtKB"/>
</dbReference>
<dbReference type="GO" id="GO:0070588">
    <property type="term" value="P:calcium ion transmembrane transport"/>
    <property type="evidence" value="ECO:0000250"/>
    <property type="project" value="UniProtKB"/>
</dbReference>
<dbReference type="GO" id="GO:0071277">
    <property type="term" value="P:cellular response to calcium ion"/>
    <property type="evidence" value="ECO:0000250"/>
    <property type="project" value="UniProtKB"/>
</dbReference>
<dbReference type="GO" id="GO:0070301">
    <property type="term" value="P:cellular response to hydrogen peroxide"/>
    <property type="evidence" value="ECO:0000314"/>
    <property type="project" value="RGD"/>
</dbReference>
<dbReference type="GO" id="GO:0071502">
    <property type="term" value="P:cellular response to temperature stimulus"/>
    <property type="evidence" value="ECO:0000250"/>
    <property type="project" value="UniProtKB"/>
</dbReference>
<dbReference type="GO" id="GO:0002407">
    <property type="term" value="P:dendritic cell chemotaxis"/>
    <property type="evidence" value="ECO:0000250"/>
    <property type="project" value="UniProtKB"/>
</dbReference>
<dbReference type="GO" id="GO:0097028">
    <property type="term" value="P:dendritic cell differentiation"/>
    <property type="evidence" value="ECO:0000250"/>
    <property type="project" value="UniProtKB"/>
</dbReference>
<dbReference type="GO" id="GO:0044849">
    <property type="term" value="P:estrous cycle"/>
    <property type="evidence" value="ECO:0000270"/>
    <property type="project" value="RGD"/>
</dbReference>
<dbReference type="GO" id="GO:0006828">
    <property type="term" value="P:manganese ion transport"/>
    <property type="evidence" value="ECO:0000266"/>
    <property type="project" value="RGD"/>
</dbReference>
<dbReference type="GO" id="GO:1900409">
    <property type="term" value="P:positive regulation of cellular response to oxidative stress"/>
    <property type="evidence" value="ECO:0000315"/>
    <property type="project" value="RGD"/>
</dbReference>
<dbReference type="GO" id="GO:0032024">
    <property type="term" value="P:positive regulation of insulin secretion"/>
    <property type="evidence" value="ECO:0000315"/>
    <property type="project" value="RGD"/>
</dbReference>
<dbReference type="GO" id="GO:0051289">
    <property type="term" value="P:protein homotetramerization"/>
    <property type="evidence" value="ECO:0000250"/>
    <property type="project" value="UniProtKB"/>
</dbReference>
<dbReference type="GO" id="GO:0032956">
    <property type="term" value="P:regulation of actin cytoskeleton organization"/>
    <property type="evidence" value="ECO:0000250"/>
    <property type="project" value="UniProtKB"/>
</dbReference>
<dbReference type="GO" id="GO:0051489">
    <property type="term" value="P:regulation of filopodium assembly"/>
    <property type="evidence" value="ECO:0000250"/>
    <property type="project" value="UniProtKB"/>
</dbReference>
<dbReference type="GO" id="GO:0051209">
    <property type="term" value="P:release of sequestered calcium ion into cytosol"/>
    <property type="evidence" value="ECO:0000250"/>
    <property type="project" value="UniProtKB"/>
</dbReference>
<dbReference type="GO" id="GO:0009408">
    <property type="term" value="P:response to heat"/>
    <property type="evidence" value="ECO:0000266"/>
    <property type="project" value="RGD"/>
</dbReference>
<dbReference type="GO" id="GO:0033194">
    <property type="term" value="P:response to hydroperoxide"/>
    <property type="evidence" value="ECO:0000266"/>
    <property type="project" value="RGD"/>
</dbReference>
<dbReference type="GO" id="GO:0014074">
    <property type="term" value="P:response to purine-containing compound"/>
    <property type="evidence" value="ECO:0000266"/>
    <property type="project" value="RGD"/>
</dbReference>
<dbReference type="GO" id="GO:0001659">
    <property type="term" value="P:temperature homeostasis"/>
    <property type="evidence" value="ECO:0000250"/>
    <property type="project" value="UniProtKB"/>
</dbReference>
<dbReference type="GO" id="GO:0071577">
    <property type="term" value="P:zinc ion transmembrane transport"/>
    <property type="evidence" value="ECO:0000250"/>
    <property type="project" value="UniProtKB"/>
</dbReference>
<dbReference type="CDD" id="cd03670">
    <property type="entry name" value="NUDIX_ADPRase_Nudt9"/>
    <property type="match status" value="1"/>
</dbReference>
<dbReference type="FunFam" id="3.90.79.10:FF:000047">
    <property type="entry name" value="Transient receptor potential cation channel subfamily M member 2"/>
    <property type="match status" value="1"/>
</dbReference>
<dbReference type="Gene3D" id="3.40.50.450">
    <property type="match status" value="1"/>
</dbReference>
<dbReference type="Gene3D" id="3.90.79.10">
    <property type="entry name" value="Nucleoside Triphosphate Pyrophosphohydrolase"/>
    <property type="match status" value="1"/>
</dbReference>
<dbReference type="InterPro" id="IPR005821">
    <property type="entry name" value="Ion_trans_dom"/>
</dbReference>
<dbReference type="InterPro" id="IPR015797">
    <property type="entry name" value="NUDIX_hydrolase-like_dom_sf"/>
</dbReference>
<dbReference type="InterPro" id="IPR000086">
    <property type="entry name" value="NUDIX_hydrolase_dom"/>
</dbReference>
<dbReference type="InterPro" id="IPR050927">
    <property type="entry name" value="TRPM"/>
</dbReference>
<dbReference type="InterPro" id="IPR041491">
    <property type="entry name" value="TRPM_SLOG"/>
</dbReference>
<dbReference type="PANTHER" id="PTHR13800:SF2">
    <property type="entry name" value="TRANSIENT RECEPTOR POTENTIAL CATION CHANNEL SUBFAMILY M MEMBER 2"/>
    <property type="match status" value="1"/>
</dbReference>
<dbReference type="PANTHER" id="PTHR13800">
    <property type="entry name" value="TRANSIENT RECEPTOR POTENTIAL CATION CHANNEL, SUBFAMILY M, MEMBER 6"/>
    <property type="match status" value="1"/>
</dbReference>
<dbReference type="Pfam" id="PF00520">
    <property type="entry name" value="Ion_trans"/>
    <property type="match status" value="1"/>
</dbReference>
<dbReference type="Pfam" id="PF18139">
    <property type="entry name" value="LSDAT_euk"/>
    <property type="match status" value="1"/>
</dbReference>
<dbReference type="Pfam" id="PF25508">
    <property type="entry name" value="TRPM2"/>
    <property type="match status" value="1"/>
</dbReference>
<dbReference type="SUPFAM" id="SSF55811">
    <property type="entry name" value="Nudix"/>
    <property type="match status" value="1"/>
</dbReference>
<dbReference type="PROSITE" id="PS51462">
    <property type="entry name" value="NUDIX"/>
    <property type="match status" value="1"/>
</dbReference>
<comment type="function">
    <text evidence="2 3 6 7 8 9 10 11 12">Nonselective, voltage-independent cation channel that mediates Na(+) and Ca(2+) influx, leading to increased cytoplasmic Ca(2+) levels (PubMed:11804595, PubMed:16260005, PubMed:16601673, PubMed:16651700, PubMed:19454650). Functions as a ligand-gated ion channel gated by intracellular adenosine diphosphate ribose (ADP-ribose), Ca(2+), warm temperature, and oxidative stress. The precise physiological activators are under debate; the true, physiological activators may be ADP-ribose and ADP-ribose-2'-phosphate (By similarity). Binding of ADP-ribose to the cytoplasmic Nudix domain causes a conformation change; the channel is primed but still requires Ca(2+) binding to trigger channel opening. Extracellular Ca(2+) passes through the channel and increases channel activity (By similarity). Also contributes to Ca(2+) release from intracellular stores in response to ADP-ribose (PubMed:19454650). Plays a role in numerous processes that involve signaling via intracellular Ca(2+) levels (Probable). Besides, mediates the release of lysosomal Zn(2+) stores in response to reactive oxygen species, leading to increased cytosolic Zn(2+) levels (PubMed:25562606). Plays a role in insulin secretion, a process that requires increased cytoplasmic Ca(2+) levels (PubMed:16601673). Required for normal IFNG and cytokine secretion and normal innate immune immunity in response to bacterial infection. Required for normal phagocytosis and cytokine release by macrophages exposed to zymosan (in vitro). Plays a role in dendritic cell differentiation and maturation, and in dendritic cell chemotaxis via its role in regulating cytoplasmic Ca(2+) levels (By similarity). Plays a role in the regulation of the reorganization of the actin cytoskeleton and filopodia formation in response to reactive oxygen species via its function in increasing cytoplasmic Ca(2+) and Zn(2+) levels (By similarity). Confers susceptibility to cell death following oxidative stress (PubMed:11804595, PubMed:16651700, PubMed:19454650, PubMed:25562606).</text>
</comment>
<comment type="catalytic activity">
    <reaction evidence="6 10">
        <text>Ca(2+)(in) = Ca(2+)(out)</text>
        <dbReference type="Rhea" id="RHEA:29671"/>
        <dbReference type="ChEBI" id="CHEBI:29108"/>
    </reaction>
</comment>
<comment type="catalytic activity">
    <reaction evidence="2">
        <text>Na(+)(in) = Na(+)(out)</text>
        <dbReference type="Rhea" id="RHEA:34963"/>
        <dbReference type="ChEBI" id="CHEBI:29101"/>
    </reaction>
</comment>
<comment type="activity regulation">
    <text evidence="2 7 8 11">Activated by intracellular ADP-ribose, beta-NAD (NAD(+)) and similar compounds, and by oxidative stress caused by reactive oxygen or nitrogen species (PubMed:16260005, PubMed:16601673, PubMed:25562606). Ca(2+) and PI(4,5)P2 are required for channel opening by ADP-ribose. Activation by ADP-ribose and beta-NAD is strongly increased by moderate heat (35 to 40 degrees Celsius) (PubMed:16601673). Likewise, reactive oxygen species lower the threshold for activation by moderate heat (37 degrees Celsius). Activated by moderate heat (35 to 40 degrees Celsius). Inactivated by exposure to extracellular pH between 4.0 and 6.5; irreversibly inactivated when open channels are exposed to extracellular pH between 4.0 and 6.5, while pre-exposure of closed channels to extracellular pH 5.5 gives rise to currents that rapidly inactivate, but protects against irreversible inactivation. Inactivated by intracellular ATP. Activated by arachidonic acid. Inhibited by 2-aminoethyl diphenylborinate (2-APB) (By similarity).</text>
</comment>
<comment type="subunit">
    <text evidence="2">Homotetramer.</text>
</comment>
<comment type="subcellular location">
    <subcellularLocation>
        <location evidence="6 7 8 9 10">Cell membrane</location>
        <topology evidence="2">Multi-pass membrane protein</topology>
    </subcellularLocation>
    <subcellularLocation>
        <location evidence="9">Perikaryon</location>
    </subcellularLocation>
    <subcellularLocation>
        <location evidence="9">Cell projection</location>
    </subcellularLocation>
    <subcellularLocation>
        <location evidence="9">Cytoplasmic vesicle</location>
    </subcellularLocation>
    <subcellularLocation>
        <location evidence="10">Lysosome</location>
    </subcellularLocation>
    <text evidence="3 9">Detected at the cell membrane and in intracellular vesicles in cortical neurons. Detected on neuronal cell bodies and neurites (PubMed:16651700). Detected on the cell membrane in polymorphonuclear neutrophils. Detected on cytoplasmic vesicles and lysosomes in immature bone marrow dendritic cells (By similarity).</text>
</comment>
<comment type="tissue specificity">
    <text evidence="8 9">Detected in pancreas beta-cells (PubMed:16601673). Detected in fetal brain cortex neurons (at protein level) (PubMed:16651700).</text>
</comment>
<comment type="domain">
    <text evidence="2">Contains two binding sites for ADP-ribose, one in the N-terminal part of the channel and the other in the C-terminal nudix hydrolase domain. Both sites seem to have a role in channel opening, but the interaction of ADP-ribose with the N-terminal site is absolutely required for channel activation.</text>
</comment>
<comment type="PTM">
    <text evidence="3">Phosphorylation of TRPM2 at Thr-739 by protein kinase C (PKC) counteracts the effect of cytosolic Ca(2+) and elevates the temperature threshold.</text>
</comment>
<comment type="similarity">
    <text evidence="12">Belongs to the transient receptor (TC 1.A.4) family. LTrpC subfamily. TRPM2 sub-subfamily.</text>
</comment>
<organism evidence="15">
    <name type="scientific">Rattus norvegicus</name>
    <name type="common">Rat</name>
    <dbReference type="NCBI Taxonomy" id="10116"/>
    <lineage>
        <taxon>Eukaryota</taxon>
        <taxon>Metazoa</taxon>
        <taxon>Chordata</taxon>
        <taxon>Craniata</taxon>
        <taxon>Vertebrata</taxon>
        <taxon>Euteleostomi</taxon>
        <taxon>Mammalia</taxon>
        <taxon>Eutheria</taxon>
        <taxon>Euarchontoglires</taxon>
        <taxon>Glires</taxon>
        <taxon>Rodentia</taxon>
        <taxon>Myomorpha</taxon>
        <taxon>Muroidea</taxon>
        <taxon>Muridae</taxon>
        <taxon>Murinae</taxon>
        <taxon>Rattus</taxon>
    </lineage>
</organism>
<gene>
    <name evidence="16" type="primary">Trpm2</name>
</gene>
<proteinExistence type="evidence at protein level"/>
<protein>
    <recommendedName>
        <fullName>Transient receptor potential cation channel subfamily M member 2</fullName>
    </recommendedName>
</protein>
<reference evidence="14" key="1">
    <citation type="journal article" date="2006" name="J. Pharmacol. Sci.">
        <title>A critical role of TRPM2 in neuronal cell death by hydrogen peroxide.</title>
        <authorList>
            <person name="Kaneko S."/>
            <person name="Kawakami S."/>
            <person name="Hara Y."/>
            <person name="Wakamori M."/>
            <person name="Itoh E."/>
            <person name="Minami T."/>
            <person name="Takada Y."/>
            <person name="Kume T."/>
            <person name="Katsuki H."/>
            <person name="Mori Y."/>
            <person name="Akaike A."/>
        </authorList>
    </citation>
    <scope>NUCLEOTIDE SEQUENCE [MRNA]</scope>
    <scope>FUNCTION</scope>
    <scope>SUBCELLULAR LOCATION</scope>
</reference>
<reference evidence="13" key="2">
    <citation type="journal article" date="2006" name="Neuropharmacology">
        <title>Characterisation of recombinant rat TRPM2 and a TRPM2-like conductance in cultured rat striatal neurones.</title>
        <authorList>
            <person name="Hill K."/>
            <person name="Tigue N.J."/>
            <person name="Kelsell R.E."/>
            <person name="Benham C.D."/>
            <person name="McNulty S."/>
            <person name="Schaefer M."/>
            <person name="Randall A.D."/>
        </authorList>
    </citation>
    <scope>NUCLEOTIDE SEQUENCE [MRNA]</scope>
    <scope>FUNCTION</scope>
    <scope>SUBCELLULAR LOCATION</scope>
</reference>
<reference key="3">
    <citation type="journal article" date="2004" name="Nature">
        <title>Genome sequence of the Brown Norway rat yields insights into mammalian evolution.</title>
        <authorList>
            <person name="Gibbs R.A."/>
            <person name="Weinstock G.M."/>
            <person name="Metzker M.L."/>
            <person name="Muzny D.M."/>
            <person name="Sodergren E.J."/>
            <person name="Scherer S."/>
            <person name="Scott G."/>
            <person name="Steffen D."/>
            <person name="Worley K.C."/>
            <person name="Burch P.E."/>
            <person name="Okwuonu G."/>
            <person name="Hines S."/>
            <person name="Lewis L."/>
            <person name="Deramo C."/>
            <person name="Delgado O."/>
            <person name="Dugan-Rocha S."/>
            <person name="Miner G."/>
            <person name="Morgan M."/>
            <person name="Hawes A."/>
            <person name="Gill R."/>
            <person name="Holt R.A."/>
            <person name="Adams M.D."/>
            <person name="Amanatides P.G."/>
            <person name="Baden-Tillson H."/>
            <person name="Barnstead M."/>
            <person name="Chin S."/>
            <person name="Evans C.A."/>
            <person name="Ferriera S."/>
            <person name="Fosler C."/>
            <person name="Glodek A."/>
            <person name="Gu Z."/>
            <person name="Jennings D."/>
            <person name="Kraft C.L."/>
            <person name="Nguyen T."/>
            <person name="Pfannkoch C.M."/>
            <person name="Sitter C."/>
            <person name="Sutton G.G."/>
            <person name="Venter J.C."/>
            <person name="Woodage T."/>
            <person name="Smith D."/>
            <person name="Lee H.-M."/>
            <person name="Gustafson E."/>
            <person name="Cahill P."/>
            <person name="Kana A."/>
            <person name="Doucette-Stamm L."/>
            <person name="Weinstock K."/>
            <person name="Fechtel K."/>
            <person name="Weiss R.B."/>
            <person name="Dunn D.M."/>
            <person name="Green E.D."/>
            <person name="Blakesley R.W."/>
            <person name="Bouffard G.G."/>
            <person name="De Jong P.J."/>
            <person name="Osoegawa K."/>
            <person name="Zhu B."/>
            <person name="Marra M."/>
            <person name="Schein J."/>
            <person name="Bosdet I."/>
            <person name="Fjell C."/>
            <person name="Jones S."/>
            <person name="Krzywinski M."/>
            <person name="Mathewson C."/>
            <person name="Siddiqui A."/>
            <person name="Wye N."/>
            <person name="McPherson J."/>
            <person name="Zhao S."/>
            <person name="Fraser C.M."/>
            <person name="Shetty J."/>
            <person name="Shatsman S."/>
            <person name="Geer K."/>
            <person name="Chen Y."/>
            <person name="Abramzon S."/>
            <person name="Nierman W.C."/>
            <person name="Havlak P.H."/>
            <person name="Chen R."/>
            <person name="Durbin K.J."/>
            <person name="Egan A."/>
            <person name="Ren Y."/>
            <person name="Song X.-Z."/>
            <person name="Li B."/>
            <person name="Liu Y."/>
            <person name="Qin X."/>
            <person name="Cawley S."/>
            <person name="Cooney A.J."/>
            <person name="D'Souza L.M."/>
            <person name="Martin K."/>
            <person name="Wu J.Q."/>
            <person name="Gonzalez-Garay M.L."/>
            <person name="Jackson A.R."/>
            <person name="Kalafus K.J."/>
            <person name="McLeod M.P."/>
            <person name="Milosavljevic A."/>
            <person name="Virk D."/>
            <person name="Volkov A."/>
            <person name="Wheeler D.A."/>
            <person name="Zhang Z."/>
            <person name="Bailey J.A."/>
            <person name="Eichler E.E."/>
            <person name="Tuzun E."/>
            <person name="Birney E."/>
            <person name="Mongin E."/>
            <person name="Ureta-Vidal A."/>
            <person name="Woodwark C."/>
            <person name="Zdobnov E."/>
            <person name="Bork P."/>
            <person name="Suyama M."/>
            <person name="Torrents D."/>
            <person name="Alexandersson M."/>
            <person name="Trask B.J."/>
            <person name="Young J.M."/>
            <person name="Huang H."/>
            <person name="Wang H."/>
            <person name="Xing H."/>
            <person name="Daniels S."/>
            <person name="Gietzen D."/>
            <person name="Schmidt J."/>
            <person name="Stevens K."/>
            <person name="Vitt U."/>
            <person name="Wingrove J."/>
            <person name="Camara F."/>
            <person name="Mar Alba M."/>
            <person name="Abril J.F."/>
            <person name="Guigo R."/>
            <person name="Smit A."/>
            <person name="Dubchak I."/>
            <person name="Rubin E.M."/>
            <person name="Couronne O."/>
            <person name="Poliakov A."/>
            <person name="Huebner N."/>
            <person name="Ganten D."/>
            <person name="Goesele C."/>
            <person name="Hummel O."/>
            <person name="Kreitler T."/>
            <person name="Lee Y.-A."/>
            <person name="Monti J."/>
            <person name="Schulz H."/>
            <person name="Zimdahl H."/>
            <person name="Himmelbauer H."/>
            <person name="Lehrach H."/>
            <person name="Jacob H.J."/>
            <person name="Bromberg S."/>
            <person name="Gullings-Handley J."/>
            <person name="Jensen-Seaman M.I."/>
            <person name="Kwitek A.E."/>
            <person name="Lazar J."/>
            <person name="Pasko D."/>
            <person name="Tonellato P.J."/>
            <person name="Twigger S."/>
            <person name="Ponting C.P."/>
            <person name="Duarte J.M."/>
            <person name="Rice S."/>
            <person name="Goodstadt L."/>
            <person name="Beatson S.A."/>
            <person name="Emes R.D."/>
            <person name="Winter E.E."/>
            <person name="Webber C."/>
            <person name="Brandt P."/>
            <person name="Nyakatura G."/>
            <person name="Adetobi M."/>
            <person name="Chiaromonte F."/>
            <person name="Elnitski L."/>
            <person name="Eswara P."/>
            <person name="Hardison R.C."/>
            <person name="Hou M."/>
            <person name="Kolbe D."/>
            <person name="Makova K."/>
            <person name="Miller W."/>
            <person name="Nekrutenko A."/>
            <person name="Riemer C."/>
            <person name="Schwartz S."/>
            <person name="Taylor J."/>
            <person name="Yang S."/>
            <person name="Zhang Y."/>
            <person name="Lindpaintner K."/>
            <person name="Andrews T.D."/>
            <person name="Caccamo M."/>
            <person name="Clamp M."/>
            <person name="Clarke L."/>
            <person name="Curwen V."/>
            <person name="Durbin R.M."/>
            <person name="Eyras E."/>
            <person name="Searle S.M."/>
            <person name="Cooper G.M."/>
            <person name="Batzoglou S."/>
            <person name="Brudno M."/>
            <person name="Sidow A."/>
            <person name="Stone E.A."/>
            <person name="Payseur B.A."/>
            <person name="Bourque G."/>
            <person name="Lopez-Otin C."/>
            <person name="Puente X.S."/>
            <person name="Chakrabarti K."/>
            <person name="Chatterji S."/>
            <person name="Dewey C."/>
            <person name="Pachter L."/>
            <person name="Bray N."/>
            <person name="Yap V.B."/>
            <person name="Caspi A."/>
            <person name="Tesler G."/>
            <person name="Pevzner P.A."/>
            <person name="Haussler D."/>
            <person name="Roskin K.M."/>
            <person name="Baertsch R."/>
            <person name="Clawson H."/>
            <person name="Furey T.S."/>
            <person name="Hinrichs A.S."/>
            <person name="Karolchik D."/>
            <person name="Kent W.J."/>
            <person name="Rosenbloom K.R."/>
            <person name="Trumbower H."/>
            <person name="Weirauch M."/>
            <person name="Cooper D.N."/>
            <person name="Stenson P.D."/>
            <person name="Ma B."/>
            <person name="Brent M."/>
            <person name="Arumugam M."/>
            <person name="Shteynberg D."/>
            <person name="Copley R.R."/>
            <person name="Taylor M.S."/>
            <person name="Riethman H."/>
            <person name="Mudunuri U."/>
            <person name="Peterson J."/>
            <person name="Guyer M."/>
            <person name="Felsenfeld A."/>
            <person name="Old S."/>
            <person name="Mockrin S."/>
            <person name="Collins F.S."/>
        </authorList>
    </citation>
    <scope>NUCLEOTIDE SEQUENCE [LARGE SCALE GENOMIC DNA]</scope>
    <source>
        <strain>Brown Norway</strain>
    </source>
</reference>
<reference key="4">
    <citation type="journal article" date="2002" name="Mol. Cell">
        <title>LTRPC2 Ca2+-permeable channel activated by changes in redox status confers susceptibility to cell death.</title>
        <authorList>
            <person name="Hara Y."/>
            <person name="Wakamori M."/>
            <person name="Ishii M."/>
            <person name="Maeno E."/>
            <person name="Nishida M."/>
            <person name="Yoshida T."/>
            <person name="Yamada H."/>
            <person name="Shimizu S."/>
            <person name="Mori E."/>
            <person name="Kudoh J."/>
            <person name="Shimizu N."/>
            <person name="Kurose H."/>
            <person name="Okada Y."/>
            <person name="Imoto K."/>
            <person name="Mori Y."/>
        </authorList>
    </citation>
    <scope>FUNCTION</scope>
    <scope>TRANSPORTER ACTIVITY</scope>
    <scope>SUBCELLULAR LOCATION</scope>
</reference>
<reference key="5">
    <citation type="journal article" date="2006" name="EMBO J.">
        <title>TRPM2 activation by cyclic ADP-ribose at body temperature is involved in insulin secretion.</title>
        <authorList>
            <person name="Togashi K."/>
            <person name="Hara Y."/>
            <person name="Tominaga T."/>
            <person name="Higashi T."/>
            <person name="Konishi Y."/>
            <person name="Mori Y."/>
            <person name="Tominaga M."/>
        </authorList>
    </citation>
    <scope>FUNCTION</scope>
    <scope>SUBCELLULAR LOCATION</scope>
    <scope>TISSUE SPECIFICITY</scope>
</reference>
<reference key="6">
    <citation type="journal article" date="2009" name="Sci. Signal.">
        <title>TRPM2 functions as a lysosomal Ca2+-release channel in beta cells.</title>
        <authorList>
            <person name="Lange I."/>
            <person name="Yamamoto S."/>
            <person name="Partida-Sanchez S."/>
            <person name="Mori Y."/>
            <person name="Fleig A."/>
            <person name="Penner R."/>
        </authorList>
    </citation>
    <scope>FUNCTION</scope>
    <scope>TRANSPORTER ACTIVITY</scope>
    <scope>SUBCELLULAR LOCATION</scope>
</reference>
<reference key="7">
    <citation type="journal article" date="2012" name="Nat. Commun.">
        <title>Quantitative maps of protein phosphorylation sites across 14 different rat organs and tissues.</title>
        <authorList>
            <person name="Lundby A."/>
            <person name="Secher A."/>
            <person name="Lage K."/>
            <person name="Nordsborg N.B."/>
            <person name="Dmytriyev A."/>
            <person name="Lundby C."/>
            <person name="Olsen J.V."/>
        </authorList>
    </citation>
    <scope>IDENTIFICATION BY MASS SPECTROMETRY [LARGE SCALE ANALYSIS]</scope>
</reference>
<reference key="8">
    <citation type="journal article" date="2015" name="Biochem. J.">
        <title>TRPM2-mediated intracellular Zn2+ release triggers pancreatic beta-cell death.</title>
        <authorList>
            <person name="Manna P.T."/>
            <person name="Munsey T.S."/>
            <person name="Abuarab N."/>
            <person name="Li F."/>
            <person name="Asipu A."/>
            <person name="Howell G."/>
            <person name="Sedo A."/>
            <person name="Yang W."/>
            <person name="Naylor J."/>
            <person name="Beech D.J."/>
            <person name="Jiang L.H."/>
            <person name="Sivaprasadarao A."/>
        </authorList>
    </citation>
    <scope>FUNCTION</scope>
</reference>
<feature type="chain" id="PRO_0000438192" description="Transient receptor potential cation channel subfamily M member 2">
    <location>
        <begin position="1"/>
        <end position="1507"/>
    </location>
</feature>
<feature type="topological domain" description="Cytoplasmic" evidence="12">
    <location>
        <begin position="1"/>
        <end position="751"/>
    </location>
</feature>
<feature type="intramembrane region" evidence="2">
    <location>
        <begin position="752"/>
        <end position="768"/>
    </location>
</feature>
<feature type="topological domain" description="Cytoplasmic" evidence="12">
    <location>
        <begin position="769"/>
        <end position="793"/>
    </location>
</feature>
<feature type="transmembrane region" description="Helical" evidence="2">
    <location>
        <begin position="794"/>
        <end position="814"/>
    </location>
</feature>
<feature type="topological domain" description="Extracellular" evidence="12">
    <location>
        <begin position="815"/>
        <end position="825"/>
    </location>
</feature>
<feature type="transmembrane region" description="Helical" evidence="2">
    <location>
        <begin position="826"/>
        <end position="846"/>
    </location>
</feature>
<feature type="topological domain" description="Cytoplasmic" evidence="12">
    <location>
        <begin position="847"/>
        <end position="865"/>
    </location>
</feature>
<feature type="transmembrane region" description="Helical" evidence="2">
    <location>
        <begin position="866"/>
        <end position="886"/>
    </location>
</feature>
<feature type="topological domain" description="Extracellular" evidence="12">
    <location>
        <begin position="887"/>
        <end position="894"/>
    </location>
</feature>
<feature type="transmembrane region" description="Helical" evidence="2">
    <location>
        <begin position="895"/>
        <end position="915"/>
    </location>
</feature>
<feature type="topological domain" description="Cytoplasmic" evidence="12">
    <location>
        <begin position="916"/>
        <end position="927"/>
    </location>
</feature>
<feature type="transmembrane region" description="Helical" evidence="2">
    <location>
        <begin position="928"/>
        <end position="948"/>
    </location>
</feature>
<feature type="topological domain" description="Extracellular" evidence="12">
    <location>
        <begin position="949"/>
        <end position="968"/>
    </location>
</feature>
<feature type="intramembrane region" description="Pore-forming" evidence="2">
    <location>
        <begin position="969"/>
        <end position="983"/>
    </location>
</feature>
<feature type="topological domain" description="Extracellular" evidence="12">
    <location>
        <begin position="984"/>
        <end position="1020"/>
    </location>
</feature>
<feature type="transmembrane region" description="Helical" evidence="2">
    <location>
        <begin position="1021"/>
        <end position="1042"/>
    </location>
</feature>
<feature type="topological domain" description="Cytoplasmic" evidence="12">
    <location>
        <begin position="1043"/>
        <end position="1077"/>
    </location>
</feature>
<feature type="intramembrane region" evidence="2">
    <location>
        <begin position="1078"/>
        <end position="1096"/>
    </location>
</feature>
<feature type="topological domain" description="Cytoplasmic" evidence="12">
    <location>
        <begin position="1097"/>
        <end position="1507"/>
    </location>
</feature>
<feature type="domain" description="Nudix hydrolase" evidence="4">
    <location>
        <begin position="1351"/>
        <end position="1502"/>
    </location>
</feature>
<feature type="region of interest" description="Disordered" evidence="5">
    <location>
        <begin position="1"/>
        <end position="24"/>
    </location>
</feature>
<feature type="short sequence motif" description="Selectivity filter" evidence="2">
    <location>
        <begin position="977"/>
        <end position="980"/>
    </location>
</feature>
<feature type="short sequence motif" description="Nudix box" evidence="4">
    <location>
        <begin position="1387"/>
        <end position="1408"/>
    </location>
</feature>
<feature type="compositionally biased region" description="Basic and acidic residues" evidence="5">
    <location>
        <begin position="1"/>
        <end position="11"/>
    </location>
</feature>
<feature type="binding site" evidence="2">
    <location>
        <position position="173"/>
    </location>
    <ligand>
        <name>ADP-D-ribose</name>
        <dbReference type="ChEBI" id="CHEBI:57967"/>
        <label>1</label>
    </ligand>
</feature>
<feature type="binding site" evidence="2">
    <location>
        <position position="178"/>
    </location>
    <ligand>
        <name>ADP-D-ribose</name>
        <dbReference type="ChEBI" id="CHEBI:57967"/>
        <label>1</label>
    </ligand>
</feature>
<feature type="binding site" evidence="2">
    <location>
        <position position="301"/>
    </location>
    <ligand>
        <name>ADP-D-ribose</name>
        <dbReference type="ChEBI" id="CHEBI:57967"/>
        <label>1</label>
    </ligand>
</feature>
<feature type="binding site" evidence="2">
    <location>
        <position position="332"/>
    </location>
    <ligand>
        <name>ADP-D-ribose</name>
        <dbReference type="ChEBI" id="CHEBI:57967"/>
        <label>1</label>
    </ligand>
</feature>
<feature type="binding site" evidence="2">
    <location>
        <position position="335"/>
    </location>
    <ligand>
        <name>ADP-D-ribose</name>
        <dbReference type="ChEBI" id="CHEBI:57967"/>
        <label>1</label>
    </ligand>
</feature>
<feature type="binding site" evidence="1">
    <location>
        <position position="841"/>
    </location>
    <ligand>
        <name>Ca(2+)</name>
        <dbReference type="ChEBI" id="CHEBI:29108"/>
    </ligand>
</feature>
<feature type="binding site" evidence="1">
    <location>
        <position position="844"/>
    </location>
    <ligand>
        <name>Ca(2+)</name>
        <dbReference type="ChEBI" id="CHEBI:29108"/>
    </ligand>
</feature>
<feature type="binding site" evidence="1">
    <location>
        <position position="867"/>
    </location>
    <ligand>
        <name>Ca(2+)</name>
        <dbReference type="ChEBI" id="CHEBI:29108"/>
    </ligand>
</feature>
<feature type="binding site" evidence="1">
    <location>
        <position position="1071"/>
    </location>
    <ligand>
        <name>Ca(2+)</name>
        <dbReference type="ChEBI" id="CHEBI:29108"/>
    </ligand>
</feature>
<feature type="binding site" evidence="2">
    <location>
        <position position="1379"/>
    </location>
    <ligand>
        <name>ADP-D-ribose</name>
        <dbReference type="ChEBI" id="CHEBI:57967"/>
        <label>2</label>
    </ligand>
</feature>
<feature type="binding site" evidence="2">
    <location>
        <position position="1428"/>
    </location>
    <ligand>
        <name>ADP-D-ribose</name>
        <dbReference type="ChEBI" id="CHEBI:57967"/>
        <label>2</label>
    </ligand>
</feature>
<feature type="binding site" evidence="2">
    <location>
        <position position="1430"/>
    </location>
    <ligand>
        <name>ADP-D-ribose</name>
        <dbReference type="ChEBI" id="CHEBI:57967"/>
        <label>2</label>
    </ligand>
</feature>
<feature type="binding site" evidence="2">
    <location>
        <position position="1489"/>
    </location>
    <ligand>
        <name>ADP-D-ribose</name>
        <dbReference type="ChEBI" id="CHEBI:57967"/>
        <label>2</label>
    </ligand>
</feature>
<feature type="binding site" evidence="2">
    <location>
        <position position="1491"/>
    </location>
    <ligand>
        <name>ADP-D-ribose</name>
        <dbReference type="ChEBI" id="CHEBI:57967"/>
        <label>2</label>
    </ligand>
</feature>
<feature type="modified residue" description="Phosphothreonine" evidence="3">
    <location>
        <position position="739"/>
    </location>
</feature>
<feature type="disulfide bond" evidence="1">
    <location>
        <begin position="994"/>
        <end position="1006"/>
    </location>
</feature>
<feature type="sequence conflict" description="In Ref. 2; AAW65801 and 1; BAE72117." evidence="12" ref="2 1">
    <original>L</original>
    <variation>P</variation>
    <location>
        <position position="783"/>
    </location>
</feature>
<feature type="sequence conflict" description="In Ref. 2; AAW65801." evidence="12" ref="2">
    <original>L</original>
    <variation>LA</variation>
    <location>
        <position position="1210"/>
    </location>
</feature>
<feature type="sequence conflict" description="In Ref. 2; AAW65801 and 1; BAE72117." evidence="12" ref="2 1">
    <original>V</original>
    <variation>M</variation>
    <location>
        <position position="1374"/>
    </location>
</feature>
<keyword id="KW-0106">Calcium</keyword>
<keyword id="KW-0107">Calcium channel</keyword>
<keyword id="KW-0109">Calcium transport</keyword>
<keyword id="KW-1003">Cell membrane</keyword>
<keyword id="KW-0966">Cell projection</keyword>
<keyword id="KW-0968">Cytoplasmic vesicle</keyword>
<keyword id="KW-1015">Disulfide bond</keyword>
<keyword id="KW-0407">Ion channel</keyword>
<keyword id="KW-0406">Ion transport</keyword>
<keyword id="KW-0458">Lysosome</keyword>
<keyword id="KW-0472">Membrane</keyword>
<keyword id="KW-0479">Metal-binding</keyword>
<keyword id="KW-0597">Phosphoprotein</keyword>
<keyword id="KW-1185">Reference proteome</keyword>
<keyword id="KW-0915">Sodium</keyword>
<keyword id="KW-0894">Sodium channel</keyword>
<keyword id="KW-0739">Sodium transport</keyword>
<keyword id="KW-0812">Transmembrane</keyword>
<keyword id="KW-1133">Transmembrane helix</keyword>
<keyword id="KW-0813">Transport</keyword>
<sequence>MEPLDQRRTDSDQEEGFGVQSRRATDLGMVPNLRRSNSSLCKSRRLLCSFSSEKQENLSSWIPENIKKKECVYFVESSKLSDAGKVVCECGYTHEQHIEVAIKPHTFQGKEWDPKKHVHEMPTDAFGDIVFTGLSQKVGKYVRLSQDTSSIVIYQLMTQHWGLDVPSLLISVTGGAKNFNMKLRLKSIFRRGLVKVAQTTGAWIITGGSHTGVMKQVGEAVRDFSLSSSCKEGDVITIGIATWGTIHNREALIHPMGGFPAEYMLDEEGQGNLTCLDSNHSHFILVDDGTHGQYGVEIPLRTKLEKFISEQTKERGGVAIKIPIVCVVLEGGPGTLHTIYNAITNGTPCVIVEGSGRVADVIAQVAALPVSEITISLIQQKLSVFFQEMFETFTENQIVEWTKKIQDIVRRRQLLTVFREGKDGQQDVDVAILQALLKASRSQDHFGHENWDHQLKLAVAWNRVDIARSEIFTDEWQWKPSDLHPMMTAALISNKPEFVRLFLENGVRLKEFVTWDTLLCLYENLEPSCLFHSKLQKVLAEEHERLAYASETPRLQMHHVAQVLRELLGDSTQLLYPRPRYTDRPRLSLPMPHIKLNVQGVSLRSLYKRSTGHVTFTIDPVRDLLIWAIIQNHRELAGIIWAQSQDCTAAALACSKILKELSKEEEDTDSSEEMLALADEFEHRAIGVFTECYRKDEERAQKLLVRVSEAWGKTTCLQLALEAKDMKFVSHGGIQAFLTKVWWGQLCVDNGLWRIILCMLAFPLLFTGFISFREKRLQALCRLARVRAFFNAPVVIFYLNILSYFAFLCLFAYVLMVDFQPSPSWCEYLIYLWLFSLVCEETRQLFYDPDGCGLMKMASLYFSDFWNKLDVGAILLFIAGLTCRLIPATLYPGRIILSLDFIMFCLRLMHIFTISKTLGPKIIIVKRMMKDVFFFLFLLAVWVVSFGVAKQAILIHNESRVDWIFRGVIYHSYLTIFGQIPTYIDGVNFSMDQCSPNGTDPYKPKCPESDWTGQAPAFPEWLTVTLLCLYLLFANILLLNLLIAMFNYTFQEVQEHTDQIWKFQRHDLIEEYHGRPPAPPPLILLSHLQLLIKRIVLKIPAKRHKQLKNKLEKNEEAALLSWELYLKENYLQNQQYQHKQRPEQKIQDISEKVDTMVDLLDMDRVKRSGSTEQRLASLEEQVTQMGRSLHWIVTTLKDSGFGSGAGALTLAQRAFDEPDAELSIRKKGEEGGDGYHVSARHLLYPDARIMRFPVPNEKVPWEAEFLIYDPPFYTAEKKDATLTDPVGDTAEPLSKINYNVVDGLMDRCSFHGTYVVQYGFPLNPMGRTGLRGRGSLSWFGPNHTLQPVVTRWKRNQGGGICRKSVRKMLEVLVVKLPQSEHWALPGGSREPGKMLPRKLKQVLQQEYWVTFETLLRQGTEVYKGYVDDPRNTDNAWIETVAVSIHFQDQNDVELKRLEENLQTHDPKESARGLEMSTEWQVVDRRIPLYVNHKKILQKVASLFGAHF</sequence>